<keyword id="KW-0066">ATP synthesis</keyword>
<keyword id="KW-0067">ATP-binding</keyword>
<keyword id="KW-0997">Cell inner membrane</keyword>
<keyword id="KW-1003">Cell membrane</keyword>
<keyword id="KW-0139">CF(1)</keyword>
<keyword id="KW-0375">Hydrogen ion transport</keyword>
<keyword id="KW-0406">Ion transport</keyword>
<keyword id="KW-0472">Membrane</keyword>
<keyword id="KW-0547">Nucleotide-binding</keyword>
<keyword id="KW-1278">Translocase</keyword>
<keyword id="KW-0813">Transport</keyword>
<sequence length="519" mass="55531">MQLNPAEISELIKSRIEGLAASSDIRNQGTVVSVTDGIVRVHGLSDVMQGEMLEFPAAADGQPSFGLALNLERDSVGAVILGEYEHISEGDTVKCTGRILEVPVGPELIGRVVNALGQPIDGKGPINAKMTDVIEKVAPGVIARQSVDQPLQTGLKSIDSMVPIGRGQRELIIGDRQTGKTAVAIDAIINQKGQGVTCIYVAIGQKASSIKNVVRALEQAGAMEYTIVVAASASESAAMQYVSAYSGCTMGEYFRDRGEDALIVYDDLSKQAVAYRQVSLLLRRPPGREAFPGDVFYLHSRLLERAARVNADYVEAFTKGEVKGKTGSLTALPVIETQAGDVSAFVPTNVISITDGQIFLETSLFNAGIRPAINAGISVSRVGGAAQTKLIKGLSGGIRTDLAQYRELAAFAQFASDLDEATRKQLDRGARVTELLKQPQYSPLSTALMGATLFTVNKGFLDDVDVKKVLAFEAGLHQYLKTSHGALLDRLQQNRAFDKEGKDEAELTQAITAFKKSFV</sequence>
<reference key="1">
    <citation type="submission" date="2006-12" db="EMBL/GenBank/DDBJ databases">
        <title>Complete sequence of chromosome 1 of Acidovorax sp. JS42.</title>
        <authorList>
            <person name="Copeland A."/>
            <person name="Lucas S."/>
            <person name="Lapidus A."/>
            <person name="Barry K."/>
            <person name="Detter J.C."/>
            <person name="Glavina del Rio T."/>
            <person name="Dalin E."/>
            <person name="Tice H."/>
            <person name="Pitluck S."/>
            <person name="Chertkov O."/>
            <person name="Brettin T."/>
            <person name="Bruce D."/>
            <person name="Han C."/>
            <person name="Tapia R."/>
            <person name="Gilna P."/>
            <person name="Schmutz J."/>
            <person name="Larimer F."/>
            <person name="Land M."/>
            <person name="Hauser L."/>
            <person name="Kyrpides N."/>
            <person name="Kim E."/>
            <person name="Stahl D."/>
            <person name="Richardson P."/>
        </authorList>
    </citation>
    <scope>NUCLEOTIDE SEQUENCE [LARGE SCALE GENOMIC DNA]</scope>
    <source>
        <strain>JS42</strain>
    </source>
</reference>
<feature type="chain" id="PRO_0000302622" description="ATP synthase subunit alpha">
    <location>
        <begin position="1"/>
        <end position="519"/>
    </location>
</feature>
<feature type="binding site" evidence="1">
    <location>
        <begin position="174"/>
        <end position="181"/>
    </location>
    <ligand>
        <name>ATP</name>
        <dbReference type="ChEBI" id="CHEBI:30616"/>
    </ligand>
</feature>
<feature type="site" description="Required for activity" evidence="1">
    <location>
        <position position="378"/>
    </location>
</feature>
<organism>
    <name type="scientific">Acidovorax sp. (strain JS42)</name>
    <dbReference type="NCBI Taxonomy" id="232721"/>
    <lineage>
        <taxon>Bacteria</taxon>
        <taxon>Pseudomonadati</taxon>
        <taxon>Pseudomonadota</taxon>
        <taxon>Betaproteobacteria</taxon>
        <taxon>Burkholderiales</taxon>
        <taxon>Comamonadaceae</taxon>
        <taxon>Acidovorax</taxon>
    </lineage>
</organism>
<comment type="function">
    <text evidence="1">Produces ATP from ADP in the presence of a proton gradient across the membrane. The alpha chain is a regulatory subunit.</text>
</comment>
<comment type="catalytic activity">
    <reaction evidence="1">
        <text>ATP + H2O + 4 H(+)(in) = ADP + phosphate + 5 H(+)(out)</text>
        <dbReference type="Rhea" id="RHEA:57720"/>
        <dbReference type="ChEBI" id="CHEBI:15377"/>
        <dbReference type="ChEBI" id="CHEBI:15378"/>
        <dbReference type="ChEBI" id="CHEBI:30616"/>
        <dbReference type="ChEBI" id="CHEBI:43474"/>
        <dbReference type="ChEBI" id="CHEBI:456216"/>
        <dbReference type="EC" id="7.1.2.2"/>
    </reaction>
</comment>
<comment type="subunit">
    <text evidence="1">F-type ATPases have 2 components, CF(1) - the catalytic core - and CF(0) - the membrane proton channel. CF(1) has five subunits: alpha(3), beta(3), gamma(1), delta(1), epsilon(1). CF(0) has three main subunits: a(1), b(2) and c(9-12). The alpha and beta chains form an alternating ring which encloses part of the gamma chain. CF(1) is attached to CF(0) by a central stalk formed by the gamma and epsilon chains, while a peripheral stalk is formed by the delta and b chains.</text>
</comment>
<comment type="subcellular location">
    <subcellularLocation>
        <location evidence="1">Cell inner membrane</location>
        <topology evidence="1">Peripheral membrane protein</topology>
    </subcellularLocation>
</comment>
<comment type="similarity">
    <text evidence="1">Belongs to the ATPase alpha/beta chains family.</text>
</comment>
<protein>
    <recommendedName>
        <fullName evidence="1">ATP synthase subunit alpha</fullName>
        <ecNumber evidence="1">7.1.2.2</ecNumber>
    </recommendedName>
    <alternativeName>
        <fullName evidence="1">ATP synthase F1 sector subunit alpha</fullName>
    </alternativeName>
    <alternativeName>
        <fullName evidence="1">F-ATPase subunit alpha</fullName>
    </alternativeName>
</protein>
<name>ATPA_ACISJ</name>
<proteinExistence type="inferred from homology"/>
<accession>A1W2T5</accession>
<evidence type="ECO:0000255" key="1">
    <source>
        <dbReference type="HAMAP-Rule" id="MF_01346"/>
    </source>
</evidence>
<dbReference type="EC" id="7.1.2.2" evidence="1"/>
<dbReference type="EMBL" id="CP000539">
    <property type="protein sequence ID" value="ABM40560.1"/>
    <property type="molecule type" value="Genomic_DNA"/>
</dbReference>
<dbReference type="SMR" id="A1W2T5"/>
<dbReference type="STRING" id="232721.Ajs_0306"/>
<dbReference type="KEGG" id="ajs:Ajs_0306"/>
<dbReference type="eggNOG" id="COG0056">
    <property type="taxonomic scope" value="Bacteria"/>
</dbReference>
<dbReference type="HOGENOM" id="CLU_010091_2_1_4"/>
<dbReference type="Proteomes" id="UP000000645">
    <property type="component" value="Chromosome"/>
</dbReference>
<dbReference type="GO" id="GO:0005886">
    <property type="term" value="C:plasma membrane"/>
    <property type="evidence" value="ECO:0007669"/>
    <property type="project" value="UniProtKB-SubCell"/>
</dbReference>
<dbReference type="GO" id="GO:0045259">
    <property type="term" value="C:proton-transporting ATP synthase complex"/>
    <property type="evidence" value="ECO:0007669"/>
    <property type="project" value="UniProtKB-KW"/>
</dbReference>
<dbReference type="GO" id="GO:0043531">
    <property type="term" value="F:ADP binding"/>
    <property type="evidence" value="ECO:0007669"/>
    <property type="project" value="TreeGrafter"/>
</dbReference>
<dbReference type="GO" id="GO:0005524">
    <property type="term" value="F:ATP binding"/>
    <property type="evidence" value="ECO:0007669"/>
    <property type="project" value="UniProtKB-UniRule"/>
</dbReference>
<dbReference type="GO" id="GO:0046933">
    <property type="term" value="F:proton-transporting ATP synthase activity, rotational mechanism"/>
    <property type="evidence" value="ECO:0007669"/>
    <property type="project" value="UniProtKB-UniRule"/>
</dbReference>
<dbReference type="CDD" id="cd18113">
    <property type="entry name" value="ATP-synt_F1_alpha_C"/>
    <property type="match status" value="1"/>
</dbReference>
<dbReference type="CDD" id="cd18116">
    <property type="entry name" value="ATP-synt_F1_alpha_N"/>
    <property type="match status" value="1"/>
</dbReference>
<dbReference type="CDD" id="cd01132">
    <property type="entry name" value="F1-ATPase_alpha_CD"/>
    <property type="match status" value="1"/>
</dbReference>
<dbReference type="FunFam" id="1.20.150.20:FF:000001">
    <property type="entry name" value="ATP synthase subunit alpha"/>
    <property type="match status" value="1"/>
</dbReference>
<dbReference type="FunFam" id="2.40.30.20:FF:000001">
    <property type="entry name" value="ATP synthase subunit alpha"/>
    <property type="match status" value="1"/>
</dbReference>
<dbReference type="FunFam" id="3.40.50.300:FF:000002">
    <property type="entry name" value="ATP synthase subunit alpha"/>
    <property type="match status" value="1"/>
</dbReference>
<dbReference type="Gene3D" id="2.40.30.20">
    <property type="match status" value="1"/>
</dbReference>
<dbReference type="Gene3D" id="1.20.150.20">
    <property type="entry name" value="ATP synthase alpha/beta chain, C-terminal domain"/>
    <property type="match status" value="1"/>
</dbReference>
<dbReference type="Gene3D" id="3.40.50.300">
    <property type="entry name" value="P-loop containing nucleotide triphosphate hydrolases"/>
    <property type="match status" value="1"/>
</dbReference>
<dbReference type="HAMAP" id="MF_01346">
    <property type="entry name" value="ATP_synth_alpha_bact"/>
    <property type="match status" value="1"/>
</dbReference>
<dbReference type="InterPro" id="IPR023366">
    <property type="entry name" value="ATP_synth_asu-like_sf"/>
</dbReference>
<dbReference type="InterPro" id="IPR000793">
    <property type="entry name" value="ATP_synth_asu_C"/>
</dbReference>
<dbReference type="InterPro" id="IPR038376">
    <property type="entry name" value="ATP_synth_asu_C_sf"/>
</dbReference>
<dbReference type="InterPro" id="IPR033732">
    <property type="entry name" value="ATP_synth_F1_a_nt-bd_dom"/>
</dbReference>
<dbReference type="InterPro" id="IPR005294">
    <property type="entry name" value="ATP_synth_F1_asu"/>
</dbReference>
<dbReference type="InterPro" id="IPR020003">
    <property type="entry name" value="ATPase_a/bsu_AS"/>
</dbReference>
<dbReference type="InterPro" id="IPR004100">
    <property type="entry name" value="ATPase_F1/V1/A1_a/bsu_N"/>
</dbReference>
<dbReference type="InterPro" id="IPR036121">
    <property type="entry name" value="ATPase_F1/V1/A1_a/bsu_N_sf"/>
</dbReference>
<dbReference type="InterPro" id="IPR000194">
    <property type="entry name" value="ATPase_F1/V1/A1_a/bsu_nucl-bd"/>
</dbReference>
<dbReference type="InterPro" id="IPR027417">
    <property type="entry name" value="P-loop_NTPase"/>
</dbReference>
<dbReference type="NCBIfam" id="TIGR00962">
    <property type="entry name" value="atpA"/>
    <property type="match status" value="1"/>
</dbReference>
<dbReference type="NCBIfam" id="NF009884">
    <property type="entry name" value="PRK13343.1"/>
    <property type="match status" value="1"/>
</dbReference>
<dbReference type="PANTHER" id="PTHR48082">
    <property type="entry name" value="ATP SYNTHASE SUBUNIT ALPHA, MITOCHONDRIAL"/>
    <property type="match status" value="1"/>
</dbReference>
<dbReference type="PANTHER" id="PTHR48082:SF2">
    <property type="entry name" value="ATP SYNTHASE SUBUNIT ALPHA, MITOCHONDRIAL"/>
    <property type="match status" value="1"/>
</dbReference>
<dbReference type="Pfam" id="PF00006">
    <property type="entry name" value="ATP-synt_ab"/>
    <property type="match status" value="1"/>
</dbReference>
<dbReference type="Pfam" id="PF00306">
    <property type="entry name" value="ATP-synt_ab_C"/>
    <property type="match status" value="1"/>
</dbReference>
<dbReference type="Pfam" id="PF02874">
    <property type="entry name" value="ATP-synt_ab_N"/>
    <property type="match status" value="1"/>
</dbReference>
<dbReference type="PIRSF" id="PIRSF039088">
    <property type="entry name" value="F_ATPase_subunit_alpha"/>
    <property type="match status" value="1"/>
</dbReference>
<dbReference type="SUPFAM" id="SSF47917">
    <property type="entry name" value="C-terminal domain of alpha and beta subunits of F1 ATP synthase"/>
    <property type="match status" value="1"/>
</dbReference>
<dbReference type="SUPFAM" id="SSF50615">
    <property type="entry name" value="N-terminal domain of alpha and beta subunits of F1 ATP synthase"/>
    <property type="match status" value="1"/>
</dbReference>
<dbReference type="SUPFAM" id="SSF52540">
    <property type="entry name" value="P-loop containing nucleoside triphosphate hydrolases"/>
    <property type="match status" value="1"/>
</dbReference>
<dbReference type="PROSITE" id="PS00152">
    <property type="entry name" value="ATPASE_ALPHA_BETA"/>
    <property type="match status" value="1"/>
</dbReference>
<gene>
    <name evidence="1" type="primary">atpA</name>
    <name type="ordered locus">Ajs_0306</name>
</gene>